<geneLocation type="chloroplast"/>
<evidence type="ECO:0000255" key="1"/>
<evidence type="ECO:0000305" key="2"/>
<dbReference type="EMBL" id="X04465">
    <property type="protein sequence ID" value="CAA28075.1"/>
    <property type="molecule type" value="Genomic_DNA"/>
</dbReference>
<dbReference type="PIR" id="S01587">
    <property type="entry name" value="A05031"/>
</dbReference>
<dbReference type="RefSeq" id="NP_039289.1">
    <property type="nucleotide sequence ID" value="NC_001319.1"/>
</dbReference>
<dbReference type="SMR" id="Q32618"/>
<dbReference type="GeneID" id="2702592"/>
<dbReference type="GO" id="GO:0031969">
    <property type="term" value="C:chloroplast membrane"/>
    <property type="evidence" value="ECO:0007669"/>
    <property type="project" value="UniProtKB-SubCell"/>
</dbReference>
<protein>
    <recommendedName>
        <fullName>Uncharacterized 6.4 kDa protein in atpA-psbA intergenic region</fullName>
    </recommendedName>
    <alternativeName>
        <fullName>ORF50</fullName>
    </alternativeName>
</protein>
<sequence>MNPFFYFVQLFFYYPFFIIFLYIYLVFFIPKTNNINFSNIFPLFSKWIKK</sequence>
<reference key="1">
    <citation type="journal article" date="1986" name="Nature">
        <title>Chloroplast gene organization deduced from complete sequence of liverwort Marchantia polymorpha chloroplast DNA.</title>
        <authorList>
            <person name="Ohyama K."/>
            <person name="Fukuzawa H."/>
            <person name="Kohchi T."/>
            <person name="Shirai H."/>
            <person name="Sano T."/>
            <person name="Sano S."/>
            <person name="Umesono K."/>
            <person name="Shiki Y."/>
            <person name="Takeuchi M."/>
            <person name="Chang Z."/>
            <person name="Aota S."/>
            <person name="Inokuchi H."/>
            <person name="Ozeki H."/>
        </authorList>
    </citation>
    <scope>NUCLEOTIDE SEQUENCE [LARGE SCALE GENOMIC DNA]</scope>
</reference>
<feature type="chain" id="PRO_0000217424" description="Uncharacterized 6.4 kDa protein in atpA-psbA intergenic region">
    <location>
        <begin position="1"/>
        <end position="50"/>
    </location>
</feature>
<feature type="transmembrane region" description="Helical" evidence="1">
    <location>
        <begin position="10"/>
        <end position="29"/>
    </location>
</feature>
<name>YCX1_MARPO</name>
<organism>
    <name type="scientific">Marchantia polymorpha</name>
    <name type="common">Common liverwort</name>
    <name type="synonym">Marchantia aquatica</name>
    <dbReference type="NCBI Taxonomy" id="3197"/>
    <lineage>
        <taxon>Eukaryota</taxon>
        <taxon>Viridiplantae</taxon>
        <taxon>Streptophyta</taxon>
        <taxon>Embryophyta</taxon>
        <taxon>Marchantiophyta</taxon>
        <taxon>Marchantiopsida</taxon>
        <taxon>Marchantiidae</taxon>
        <taxon>Marchantiales</taxon>
        <taxon>Marchantiaceae</taxon>
        <taxon>Marchantia</taxon>
    </lineage>
</organism>
<comment type="subcellular location">
    <subcellularLocation>
        <location evidence="2">Plastid</location>
        <location evidence="2">Chloroplast membrane</location>
        <topology evidence="2">Single-pass membrane protein</topology>
    </subcellularLocation>
</comment>
<keyword id="KW-0150">Chloroplast</keyword>
<keyword id="KW-0472">Membrane</keyword>
<keyword id="KW-0934">Plastid</keyword>
<keyword id="KW-0812">Transmembrane</keyword>
<keyword id="KW-1133">Transmembrane helix</keyword>
<proteinExistence type="predicted"/>
<accession>Q32618</accession>